<feature type="chain" id="PRO_0000299163" description="G-protein coupled receptor-associated protein LMBRD2">
    <location>
        <begin position="1"/>
        <end position="688"/>
    </location>
</feature>
<feature type="topological domain" description="Extracellular" evidence="2">
    <location>
        <begin position="1"/>
        <end position="3"/>
    </location>
</feature>
<feature type="transmembrane region" description="Helical" evidence="2">
    <location>
        <begin position="4"/>
        <end position="21"/>
    </location>
</feature>
<feature type="topological domain" description="Cytoplasmic" evidence="2">
    <location>
        <begin position="22"/>
        <end position="32"/>
    </location>
</feature>
<feature type="transmembrane region" description="Helical" evidence="2">
    <location>
        <begin position="33"/>
        <end position="53"/>
    </location>
</feature>
<feature type="topological domain" description="Extracellular" evidence="2">
    <location>
        <begin position="54"/>
        <end position="99"/>
    </location>
</feature>
<feature type="transmembrane region" description="Helical" evidence="2">
    <location>
        <begin position="100"/>
        <end position="120"/>
    </location>
</feature>
<feature type="topological domain" description="Cytoplasmic" evidence="2">
    <location>
        <begin position="121"/>
        <end position="144"/>
    </location>
</feature>
<feature type="transmembrane region" description="Helical" evidence="2">
    <location>
        <begin position="145"/>
        <end position="165"/>
    </location>
</feature>
<feature type="topological domain" description="Extracellular" evidence="2">
    <location>
        <begin position="166"/>
        <end position="180"/>
    </location>
</feature>
<feature type="transmembrane region" description="Helical" evidence="2">
    <location>
        <begin position="181"/>
        <end position="201"/>
    </location>
</feature>
<feature type="topological domain" description="Cytoplasmic" evidence="2">
    <location>
        <begin position="202"/>
        <end position="381"/>
    </location>
</feature>
<feature type="transmembrane region" description="Helical" evidence="2">
    <location>
        <begin position="382"/>
        <end position="402"/>
    </location>
</feature>
<feature type="topological domain" description="Extracellular" evidence="2">
    <location>
        <begin position="403"/>
        <end position="426"/>
    </location>
</feature>
<feature type="transmembrane region" description="Helical" evidence="2">
    <location>
        <begin position="427"/>
        <end position="447"/>
    </location>
</feature>
<feature type="topological domain" description="Cytoplasmic" evidence="2">
    <location>
        <begin position="448"/>
        <end position="467"/>
    </location>
</feature>
<feature type="transmembrane region" description="Helical" evidence="2">
    <location>
        <begin position="468"/>
        <end position="488"/>
    </location>
</feature>
<feature type="topological domain" description="Extracellular" evidence="2">
    <location>
        <begin position="489"/>
        <end position="515"/>
    </location>
</feature>
<feature type="transmembrane region" description="Helical" evidence="2">
    <location>
        <begin position="516"/>
        <end position="536"/>
    </location>
</feature>
<feature type="topological domain" description="Cytoplasmic" evidence="2">
    <location>
        <begin position="537"/>
        <end position="688"/>
    </location>
</feature>
<feature type="region of interest" description="Disordered" evidence="3">
    <location>
        <begin position="600"/>
        <end position="673"/>
    </location>
</feature>
<feature type="coiled-coil region" evidence="2">
    <location>
        <begin position="222"/>
        <end position="254"/>
    </location>
</feature>
<feature type="compositionally biased region" description="Basic and acidic residues" evidence="3">
    <location>
        <begin position="600"/>
        <end position="617"/>
    </location>
</feature>
<feature type="compositionally biased region" description="Polar residues" evidence="3">
    <location>
        <begin position="618"/>
        <end position="634"/>
    </location>
</feature>
<feature type="compositionally biased region" description="Basic and acidic residues" evidence="3">
    <location>
        <begin position="635"/>
        <end position="644"/>
    </location>
</feature>
<feature type="glycosylation site" description="N-linked (GlcNAc...) asparagine" evidence="2">
    <location>
        <position position="76"/>
    </location>
</feature>
<evidence type="ECO:0000250" key="1">
    <source>
        <dbReference type="UniProtKB" id="Q68DH5"/>
    </source>
</evidence>
<evidence type="ECO:0000255" key="2"/>
<evidence type="ECO:0000256" key="3">
    <source>
        <dbReference type="SAM" id="MobiDB-lite"/>
    </source>
</evidence>
<evidence type="ECO:0000305" key="4"/>
<evidence type="ECO:0000312" key="5">
    <source>
        <dbReference type="EMBL" id="CAH65329.1"/>
    </source>
</evidence>
<reference key="1">
    <citation type="journal article" date="2005" name="Genome Biol.">
        <title>Full-length cDNAs from chicken bursal lymphocytes to facilitate gene function analysis.</title>
        <authorList>
            <person name="Caldwell R.B."/>
            <person name="Kierzek A.M."/>
            <person name="Arakawa H."/>
            <person name="Bezzubov Y."/>
            <person name="Zaim J."/>
            <person name="Fiedler P."/>
            <person name="Kutter S."/>
            <person name="Blagodatski A."/>
            <person name="Kostovska D."/>
            <person name="Koter M."/>
            <person name="Plachy J."/>
            <person name="Carninci P."/>
            <person name="Hayashizaki Y."/>
            <person name="Buerstedde J.-M."/>
        </authorList>
    </citation>
    <scope>NUCLEOTIDE SEQUENCE [LARGE SCALE MRNA]</scope>
    <source>
        <strain>CB</strain>
        <tissue>Bursa of Fabricius</tissue>
    </source>
</reference>
<gene>
    <name evidence="1" type="primary">LMBRD2</name>
    <name evidence="5" type="ORF">RCJMB04_18o10</name>
</gene>
<keyword id="KW-1003">Cell membrane</keyword>
<keyword id="KW-0175">Coiled coil</keyword>
<keyword id="KW-0325">Glycoprotein</keyword>
<keyword id="KW-0472">Membrane</keyword>
<keyword id="KW-1185">Reference proteome</keyword>
<keyword id="KW-0812">Transmembrane</keyword>
<keyword id="KW-1133">Transmembrane helix</keyword>
<accession>Q5F3F5</accession>
<name>LMBD2_CHICK</name>
<protein>
    <recommendedName>
        <fullName evidence="1">G-protein coupled receptor-associated protein LMBRD2</fullName>
    </recommendedName>
</protein>
<organism>
    <name type="scientific">Gallus gallus</name>
    <name type="common">Chicken</name>
    <dbReference type="NCBI Taxonomy" id="9031"/>
    <lineage>
        <taxon>Eukaryota</taxon>
        <taxon>Metazoa</taxon>
        <taxon>Chordata</taxon>
        <taxon>Craniata</taxon>
        <taxon>Vertebrata</taxon>
        <taxon>Euteleostomi</taxon>
        <taxon>Archelosauria</taxon>
        <taxon>Archosauria</taxon>
        <taxon>Dinosauria</taxon>
        <taxon>Saurischia</taxon>
        <taxon>Theropoda</taxon>
        <taxon>Coelurosauria</taxon>
        <taxon>Aves</taxon>
        <taxon>Neognathae</taxon>
        <taxon>Galloanserae</taxon>
        <taxon>Galliformes</taxon>
        <taxon>Phasianidae</taxon>
        <taxon>Phasianinae</taxon>
        <taxon>Gallus</taxon>
    </lineage>
</organism>
<comment type="function">
    <text evidence="1">May associate with G-protein coupled receptors and regulate downstream signaling pathways.</text>
</comment>
<comment type="subcellular location">
    <subcellularLocation>
        <location evidence="1">Cell membrane</location>
        <topology evidence="2">Multi-pass membrane protein</topology>
    </subcellularLocation>
</comment>
<comment type="similarity">
    <text evidence="4">Belongs to the LIMR family.</text>
</comment>
<sequence length="688" mass="80291">MSGAALGLEIVFVFFLALFLLHRYGDFKKQHRLVIIATLLAWYLCFLIVFILPLDVSTTIYNRCKLAVNSSPAESNSSFVTLAPSKQQCFKPWSYIPNGIMPIFWRVVYWTSQFLTWILLPFMQSYARSGGFSITGKIKTALIENAIYYGTYLLIFGAFLIYVAVNPKFNLQWNQLQTIGIAAANTWGLFLLVLLLGYGLVEIPRSHWNGAKRGYLLMKTYFKAAKLMTEKADAEENLEDIMEEVRKVSESIKYNHPLRKCVDTILKKCPTEYQERMGRNMDDYEDFDERQNSYPSEKSLVKLHKQVIYSVQRHRRTQVQWQILLEQAFYLEDVAKNETSATRQFVHTFQSQEPENKIIQYFYTPTVEWYWECLLRPWFYRVLAVVLAAFSVIVVWSECTFFSTRPVLSLVAVFIQLAEKTYNYIYIEMACFLTIFFLSICVYSTVFRIRVFNYYYLASHHQTDAYSLLFSGMLFCRLTPPLCLNFLGLTHMDATISHTDAQPTAYTSIMGSMKVLSFIADGFYIYYPMLVVILCIATYFSLGTRCLNLLGFQQFMGDSEMTSDLIDEGKELIRREKGRRQRQEEGENRRREWKERYGNREDSTRNRVVHTEQKESSFSETNTNRPLSKYTRTNGRTERDRIELLQDAEPLDFNADSINDDPLESDSGRYQPGGRYLSMSRSRIFEDV</sequence>
<dbReference type="EMBL" id="AJ851695">
    <property type="protein sequence ID" value="CAH65329.1"/>
    <property type="molecule type" value="mRNA"/>
</dbReference>
<dbReference type="RefSeq" id="NP_001026750.1">
    <property type="nucleotide sequence ID" value="NM_001031579.1"/>
</dbReference>
<dbReference type="SMR" id="Q5F3F5"/>
<dbReference type="FunCoup" id="Q5F3F5">
    <property type="interactions" value="1900"/>
</dbReference>
<dbReference type="STRING" id="9031.ENSGALP00000021784"/>
<dbReference type="GlyCosmos" id="Q5F3F5">
    <property type="glycosylation" value="1 site, No reported glycans"/>
</dbReference>
<dbReference type="GlyGen" id="Q5F3F5">
    <property type="glycosylation" value="1 site"/>
</dbReference>
<dbReference type="PaxDb" id="9031-ENSGALP00000021784"/>
<dbReference type="GeneID" id="429640"/>
<dbReference type="KEGG" id="gga:429640"/>
<dbReference type="CTD" id="92255"/>
<dbReference type="VEuPathDB" id="HostDB:geneid_429640"/>
<dbReference type="eggNOG" id="KOG2296">
    <property type="taxonomic scope" value="Eukaryota"/>
</dbReference>
<dbReference type="InParanoid" id="Q5F3F5"/>
<dbReference type="OMA" id="QLERICY"/>
<dbReference type="OrthoDB" id="203099at2759"/>
<dbReference type="PhylomeDB" id="Q5F3F5"/>
<dbReference type="PRO" id="PR:Q5F3F5"/>
<dbReference type="Proteomes" id="UP000000539">
    <property type="component" value="Unassembled WGS sequence"/>
</dbReference>
<dbReference type="GO" id="GO:0016020">
    <property type="term" value="C:membrane"/>
    <property type="evidence" value="ECO:0000318"/>
    <property type="project" value="GO_Central"/>
</dbReference>
<dbReference type="GO" id="GO:0005886">
    <property type="term" value="C:plasma membrane"/>
    <property type="evidence" value="ECO:0007669"/>
    <property type="project" value="UniProtKB-SubCell"/>
</dbReference>
<dbReference type="GO" id="GO:0071875">
    <property type="term" value="P:adrenergic receptor signaling pathway"/>
    <property type="evidence" value="ECO:0000250"/>
    <property type="project" value="UniProtKB"/>
</dbReference>
<dbReference type="InterPro" id="IPR051584">
    <property type="entry name" value="GPCR-associated_LMBR1"/>
</dbReference>
<dbReference type="InterPro" id="IPR006876">
    <property type="entry name" value="LMBR1-like_membr_prot"/>
</dbReference>
<dbReference type="PANTHER" id="PTHR21355">
    <property type="entry name" value="G-PROTEIN COUPLED RECEPTOR-ASSOCIATED PROTEIN LMBRD2"/>
    <property type="match status" value="1"/>
</dbReference>
<dbReference type="PANTHER" id="PTHR21355:SF0">
    <property type="entry name" value="G-PROTEIN COUPLED RECEPTOR-ASSOCIATED PROTEIN LMBRD2"/>
    <property type="match status" value="1"/>
</dbReference>
<dbReference type="Pfam" id="PF04791">
    <property type="entry name" value="LMBR1"/>
    <property type="match status" value="1"/>
</dbReference>
<proteinExistence type="evidence at transcript level"/>